<gene>
    <name evidence="1" type="primary">sepF</name>
    <name type="ordered locus">RSal33209_2488</name>
</gene>
<reference key="1">
    <citation type="journal article" date="2008" name="J. Bacteriol.">
        <title>Genome sequence of the fish pathogen Renibacterium salmoninarum suggests reductive evolution away from an environmental Arthrobacter ancestor.</title>
        <authorList>
            <person name="Wiens G.D."/>
            <person name="Rockey D.D."/>
            <person name="Wu Z."/>
            <person name="Chang J."/>
            <person name="Levy R."/>
            <person name="Crane S."/>
            <person name="Chen D.S."/>
            <person name="Capri G.R."/>
            <person name="Burnett J.R."/>
            <person name="Sudheesh P.S."/>
            <person name="Schipma M.J."/>
            <person name="Burd H."/>
            <person name="Bhattacharyya A."/>
            <person name="Rhodes L.D."/>
            <person name="Kaul R."/>
            <person name="Strom M.S."/>
        </authorList>
    </citation>
    <scope>NUCLEOTIDE SEQUENCE [LARGE SCALE GENOMIC DNA]</scope>
    <source>
        <strain>ATCC 33209 / DSM 20767 / JCM 11484 / NBRC 15589 / NCIMB 2235</strain>
    </source>
</reference>
<accession>A9WRD2</accession>
<comment type="function">
    <text evidence="1">Cell division protein that is part of the divisome complex and is recruited early to the Z-ring. Probably stimulates Z-ring formation, perhaps through the cross-linking of FtsZ protofilaments. Its function overlaps with FtsA.</text>
</comment>
<comment type="subunit">
    <text evidence="1">Homodimer. Interacts with FtsZ.</text>
</comment>
<comment type="subcellular location">
    <subcellularLocation>
        <location evidence="1">Cytoplasm</location>
    </subcellularLocation>
    <text evidence="1">Localizes to the division site, in a FtsZ-dependent manner.</text>
</comment>
<comment type="similarity">
    <text evidence="1">Belongs to the SepF family.</text>
</comment>
<name>SEPF_RENSM</name>
<sequence length="172" mass="19022">MAGALRKTMIYLGLADGDEHYEPQPEGKQTRPAQKNEEYVDQEIRHTEPASAHQASEDEYRAPVTPIKRAASNRDDSSGLRQITTVHPRSYNDAKVIGESFRDGIPVIMNVTDMGEGDAKRLVDFSAGLVFGLHGSIERVTNKVFLLSPVFVEVIGDDKKASENQASFFNQS</sequence>
<keyword id="KW-0131">Cell cycle</keyword>
<keyword id="KW-0132">Cell division</keyword>
<keyword id="KW-0963">Cytoplasm</keyword>
<keyword id="KW-1185">Reference proteome</keyword>
<keyword id="KW-0717">Septation</keyword>
<protein>
    <recommendedName>
        <fullName evidence="1">Cell division protein SepF</fullName>
    </recommendedName>
</protein>
<evidence type="ECO:0000255" key="1">
    <source>
        <dbReference type="HAMAP-Rule" id="MF_01197"/>
    </source>
</evidence>
<evidence type="ECO:0000256" key="2">
    <source>
        <dbReference type="SAM" id="MobiDB-lite"/>
    </source>
</evidence>
<dbReference type="EMBL" id="CP000910">
    <property type="protein sequence ID" value="ABY24214.1"/>
    <property type="molecule type" value="Genomic_DNA"/>
</dbReference>
<dbReference type="RefSeq" id="WP_012245874.1">
    <property type="nucleotide sequence ID" value="NC_010168.1"/>
</dbReference>
<dbReference type="SMR" id="A9WRD2"/>
<dbReference type="STRING" id="288705.RSal33209_2488"/>
<dbReference type="KEGG" id="rsa:RSal33209_2488"/>
<dbReference type="eggNOG" id="COG1799">
    <property type="taxonomic scope" value="Bacteria"/>
</dbReference>
<dbReference type="HOGENOM" id="CLU_078499_0_0_11"/>
<dbReference type="Proteomes" id="UP000002007">
    <property type="component" value="Chromosome"/>
</dbReference>
<dbReference type="GO" id="GO:0005737">
    <property type="term" value="C:cytoplasm"/>
    <property type="evidence" value="ECO:0007669"/>
    <property type="project" value="UniProtKB-SubCell"/>
</dbReference>
<dbReference type="GO" id="GO:0000917">
    <property type="term" value="P:division septum assembly"/>
    <property type="evidence" value="ECO:0007669"/>
    <property type="project" value="UniProtKB-KW"/>
</dbReference>
<dbReference type="GO" id="GO:0043093">
    <property type="term" value="P:FtsZ-dependent cytokinesis"/>
    <property type="evidence" value="ECO:0007669"/>
    <property type="project" value="UniProtKB-UniRule"/>
</dbReference>
<dbReference type="Gene3D" id="3.30.110.150">
    <property type="entry name" value="SepF-like protein"/>
    <property type="match status" value="1"/>
</dbReference>
<dbReference type="HAMAP" id="MF_01197">
    <property type="entry name" value="SepF"/>
    <property type="match status" value="1"/>
</dbReference>
<dbReference type="InterPro" id="IPR023052">
    <property type="entry name" value="Cell_div_SepF"/>
</dbReference>
<dbReference type="InterPro" id="IPR007561">
    <property type="entry name" value="Cell_div_SepF/SepF-rel"/>
</dbReference>
<dbReference type="InterPro" id="IPR038594">
    <property type="entry name" value="SepF-like_sf"/>
</dbReference>
<dbReference type="PANTHER" id="PTHR35798">
    <property type="entry name" value="CELL DIVISION PROTEIN SEPF"/>
    <property type="match status" value="1"/>
</dbReference>
<dbReference type="PANTHER" id="PTHR35798:SF1">
    <property type="entry name" value="CELL DIVISION PROTEIN SEPF"/>
    <property type="match status" value="1"/>
</dbReference>
<dbReference type="Pfam" id="PF04472">
    <property type="entry name" value="SepF"/>
    <property type="match status" value="1"/>
</dbReference>
<organism>
    <name type="scientific">Renibacterium salmoninarum (strain ATCC 33209 / DSM 20767 / JCM 11484 / NBRC 15589 / NCIMB 2235)</name>
    <dbReference type="NCBI Taxonomy" id="288705"/>
    <lineage>
        <taxon>Bacteria</taxon>
        <taxon>Bacillati</taxon>
        <taxon>Actinomycetota</taxon>
        <taxon>Actinomycetes</taxon>
        <taxon>Micrococcales</taxon>
        <taxon>Micrococcaceae</taxon>
        <taxon>Renibacterium</taxon>
    </lineage>
</organism>
<proteinExistence type="inferred from homology"/>
<feature type="chain" id="PRO_0000334068" description="Cell division protein SepF">
    <location>
        <begin position="1"/>
        <end position="172"/>
    </location>
</feature>
<feature type="region of interest" description="Disordered" evidence="2">
    <location>
        <begin position="16"/>
        <end position="78"/>
    </location>
</feature>
<feature type="compositionally biased region" description="Basic and acidic residues" evidence="2">
    <location>
        <begin position="17"/>
        <end position="48"/>
    </location>
</feature>